<gene>
    <name evidence="3" type="primary">mkk1</name>
    <name type="ORF">VM1G_00540</name>
</gene>
<keyword id="KW-0067">ATP-binding</keyword>
<keyword id="KW-0183">Conidiation</keyword>
<keyword id="KW-0418">Kinase</keyword>
<keyword id="KW-0547">Nucleotide-binding</keyword>
<keyword id="KW-0723">Serine/threonine-protein kinase</keyword>
<keyword id="KW-0749">Sporulation</keyword>
<keyword id="KW-0808">Transferase</keyword>
<keyword id="KW-0843">Virulence</keyword>
<name>MKK1_CYTMA</name>
<organism>
    <name type="scientific">Cytospora mali</name>
    <name type="common">Apple Valsa canker fungus</name>
    <name type="synonym">Valsa mali</name>
    <dbReference type="NCBI Taxonomy" id="578113"/>
    <lineage>
        <taxon>Eukaryota</taxon>
        <taxon>Fungi</taxon>
        <taxon>Dikarya</taxon>
        <taxon>Ascomycota</taxon>
        <taxon>Pezizomycotina</taxon>
        <taxon>Sordariomycetes</taxon>
        <taxon>Sordariomycetidae</taxon>
        <taxon>Diaporthales</taxon>
        <taxon>Cytosporaceae</taxon>
        <taxon>Cytospora</taxon>
    </lineage>
</organism>
<accession>A0A194VNL2</accession>
<protein>
    <recommendedName>
        <fullName evidence="3">Mitogen-activated protein kinase kinase mkk1</fullName>
        <shortName evidence="3">MAP kinase kinase mkk1</shortName>
        <shortName evidence="3">MAPKK mkk1</shortName>
        <ecNumber evidence="5">2.7.11.24</ecNumber>
    </recommendedName>
</protein>
<dbReference type="EC" id="2.7.11.24" evidence="5"/>
<dbReference type="EMBL" id="CM003098">
    <property type="protein sequence ID" value="KUI65572.1"/>
    <property type="molecule type" value="Genomic_DNA"/>
</dbReference>
<dbReference type="SMR" id="A0A194VNL2"/>
<dbReference type="OrthoDB" id="650865at147550"/>
<dbReference type="Proteomes" id="UP000078559">
    <property type="component" value="Chromosome 1"/>
</dbReference>
<dbReference type="GO" id="GO:0005524">
    <property type="term" value="F:ATP binding"/>
    <property type="evidence" value="ECO:0007669"/>
    <property type="project" value="UniProtKB-UniRule"/>
</dbReference>
<dbReference type="GO" id="GO:0004672">
    <property type="term" value="F:protein kinase activity"/>
    <property type="evidence" value="ECO:0007669"/>
    <property type="project" value="InterPro"/>
</dbReference>
<dbReference type="GO" id="GO:0000165">
    <property type="term" value="P:MAPK cascade"/>
    <property type="evidence" value="ECO:0007669"/>
    <property type="project" value="UniProtKB-ARBA"/>
</dbReference>
<dbReference type="FunFam" id="3.30.200.20:FF:000294">
    <property type="entry name" value="Map kinase kinase"/>
    <property type="match status" value="1"/>
</dbReference>
<dbReference type="FunFam" id="1.10.510.10:FF:000263">
    <property type="entry name" value="MAP kinase skh1/pek1"/>
    <property type="match status" value="1"/>
</dbReference>
<dbReference type="Gene3D" id="3.30.200.20">
    <property type="entry name" value="Phosphorylase Kinase, domain 1"/>
    <property type="match status" value="1"/>
</dbReference>
<dbReference type="Gene3D" id="1.10.510.10">
    <property type="entry name" value="Transferase(Phosphotransferase) domain 1"/>
    <property type="match status" value="1"/>
</dbReference>
<dbReference type="InterPro" id="IPR011009">
    <property type="entry name" value="Kinase-like_dom_sf"/>
</dbReference>
<dbReference type="InterPro" id="IPR050915">
    <property type="entry name" value="MAP_kinase_kinase"/>
</dbReference>
<dbReference type="InterPro" id="IPR000719">
    <property type="entry name" value="Prot_kinase_dom"/>
</dbReference>
<dbReference type="InterPro" id="IPR017441">
    <property type="entry name" value="Protein_kinase_ATP_BS"/>
</dbReference>
<dbReference type="InterPro" id="IPR008271">
    <property type="entry name" value="Ser/Thr_kinase_AS"/>
</dbReference>
<dbReference type="PANTHER" id="PTHR47448">
    <property type="entry name" value="DUAL SPECIFICITY MITOGEN-ACTIVATED PROTEIN KINASE KINASE DSOR1-LIKE PROTEIN"/>
    <property type="match status" value="1"/>
</dbReference>
<dbReference type="PANTHER" id="PTHR47448:SF5">
    <property type="entry name" value="MITOGEN-ACTIVATED PROTEIN KINASE KINAE MKK2"/>
    <property type="match status" value="1"/>
</dbReference>
<dbReference type="Pfam" id="PF00069">
    <property type="entry name" value="Pkinase"/>
    <property type="match status" value="1"/>
</dbReference>
<dbReference type="SMART" id="SM00220">
    <property type="entry name" value="S_TKc"/>
    <property type="match status" value="1"/>
</dbReference>
<dbReference type="SUPFAM" id="SSF56112">
    <property type="entry name" value="Protein kinase-like (PK-like)"/>
    <property type="match status" value="1"/>
</dbReference>
<dbReference type="PROSITE" id="PS00107">
    <property type="entry name" value="PROTEIN_KINASE_ATP"/>
    <property type="match status" value="1"/>
</dbReference>
<dbReference type="PROSITE" id="PS50011">
    <property type="entry name" value="PROTEIN_KINASE_DOM"/>
    <property type="match status" value="1"/>
</dbReference>
<dbReference type="PROSITE" id="PS00108">
    <property type="entry name" value="PROTEIN_KINASE_ST"/>
    <property type="match status" value="1"/>
</dbReference>
<proteinExistence type="inferred from homology"/>
<feature type="chain" id="PRO_0000462554" description="Mitogen-activated protein kinase kinase mkk1">
    <location>
        <begin position="1"/>
        <end position="532"/>
    </location>
</feature>
<feature type="domain" description="Protein kinase" evidence="1">
    <location>
        <begin position="235"/>
        <end position="505"/>
    </location>
</feature>
<feature type="active site" description="Proton acceptor" evidence="1">
    <location>
        <position position="362"/>
    </location>
</feature>
<feature type="binding site" evidence="1">
    <location>
        <begin position="241"/>
        <end position="249"/>
    </location>
    <ligand>
        <name>ATP</name>
        <dbReference type="ChEBI" id="CHEBI:30616"/>
    </ligand>
</feature>
<feature type="binding site" evidence="1">
    <location>
        <position position="264"/>
    </location>
    <ligand>
        <name>ATP</name>
        <dbReference type="ChEBI" id="CHEBI:30616"/>
    </ligand>
</feature>
<evidence type="ECO:0000255" key="1">
    <source>
        <dbReference type="PROSITE-ProRule" id="PRU00159"/>
    </source>
</evidence>
<evidence type="ECO:0000269" key="2">
    <source>
    </source>
</evidence>
<evidence type="ECO:0000303" key="3">
    <source>
    </source>
</evidence>
<evidence type="ECO:0000305" key="4"/>
<evidence type="ECO:0000305" key="5">
    <source>
    </source>
</evidence>
<sequence>MMHNQGNSNGDPAAPMSNLQEPQVPMLSQTPNPVPMMNAPAPLLRPAIPGARGARPPRLGLAIPPSPNVKPVGGNAAGPPLQVPSRPPLPVLHLATPMGSTVAPQEHQPNRGAQPGQSASGGSESSAAHSRTGSFGPLDGRGSNPTSAGSQYSALSFASQYGLGGAKPHGTPDPVSAVGSLYSNASEGGVGMEREGSMHGLEASFDKMSLEKARTSDAEDLDDEGWRIVSMENRIVELGGLGEGAGGAVTRCKLKGGKTVFALKVITTNPDPDIKKQILREINFNKGCASEHICRYYGGFLDPSTATISIAMEFCEGGSLDSIYKEVKRLGGRTGEKVLGKIAEGVLQGLTYLEAKRILHRDIKPSNILLCRNGEVKLCDFGVSGDFGTKGEANTFIGTSYYMAPERITGQTYTITSDVWSTGVTLLEVAQHRFPFPADGTEMQPRAGLIDLLTYIVQQPIPKLKDEPEAGIFWSDNFKHFIEACLEKNPKRRGMPWKMLEHPWMTELKTKRVNMSKYLTQVWGWDDPKGSK</sequence>
<comment type="function">
    <text evidence="2">Mitogen-activated protein kinase kinase, part of the mkh1-mkk1-spm1 MAPK cascade that regulates regulates vegetative growth, conidial formation, colony surface hydrophobicity, osmotic stress, cell wall integrity maintenance, carbon and nitrogen source utilization, chitin distribution, septa formation, and pathogenicity.</text>
</comment>
<comment type="catalytic activity">
    <reaction evidence="5">
        <text>L-seryl-[protein] + ATP = O-phospho-L-seryl-[protein] + ADP + H(+)</text>
        <dbReference type="Rhea" id="RHEA:17989"/>
        <dbReference type="Rhea" id="RHEA-COMP:9863"/>
        <dbReference type="Rhea" id="RHEA-COMP:11604"/>
        <dbReference type="ChEBI" id="CHEBI:15378"/>
        <dbReference type="ChEBI" id="CHEBI:29999"/>
        <dbReference type="ChEBI" id="CHEBI:30616"/>
        <dbReference type="ChEBI" id="CHEBI:83421"/>
        <dbReference type="ChEBI" id="CHEBI:456216"/>
        <dbReference type="EC" id="2.7.11.24"/>
    </reaction>
    <physiologicalReaction direction="left-to-right" evidence="5">
        <dbReference type="Rhea" id="RHEA:17990"/>
    </physiologicalReaction>
</comment>
<comment type="catalytic activity">
    <reaction evidence="5">
        <text>L-threonyl-[protein] + ATP = O-phospho-L-threonyl-[protein] + ADP + H(+)</text>
        <dbReference type="Rhea" id="RHEA:46608"/>
        <dbReference type="Rhea" id="RHEA-COMP:11060"/>
        <dbReference type="Rhea" id="RHEA-COMP:11605"/>
        <dbReference type="ChEBI" id="CHEBI:15378"/>
        <dbReference type="ChEBI" id="CHEBI:30013"/>
        <dbReference type="ChEBI" id="CHEBI:30616"/>
        <dbReference type="ChEBI" id="CHEBI:61977"/>
        <dbReference type="ChEBI" id="CHEBI:456216"/>
        <dbReference type="EC" id="2.7.11.24"/>
    </reaction>
    <physiologicalReaction direction="left-to-right" evidence="5">
        <dbReference type="Rhea" id="RHEA:46609"/>
    </physiologicalReaction>
</comment>
<comment type="disruption phenotype">
    <text evidence="2">Does not affect significantly the growth rate but produces fewer conidia (PubMed:39631571). Inhibits significantly hyphal growth upon high osmotic stresses and in the presence of cell wall stress agents such as Congo red, calcofluor white or SDS (PubMed:39631571). Accumulates chitin at the hyphal tips (PubMed:39631571). Leads also to a looser distribution of spacers (PubMed:39631571).</text>
</comment>
<comment type="similarity">
    <text evidence="4">Belongs to the protein kinase superfamily. STE Ser/Thr protein kinase family. MAP kinase kinase subfamily.</text>
</comment>
<reference key="1">
    <citation type="journal article" date="2015" name="New Phytol.">
        <title>Genome sequence of Valsa canker pathogens uncovers a potential adaptation of colonization of woody bark.</title>
        <authorList>
            <person name="Yin Z."/>
            <person name="Liu H."/>
            <person name="Li Z."/>
            <person name="Ke X."/>
            <person name="Dou D."/>
            <person name="Gao X."/>
            <person name="Song N."/>
            <person name="Dai Q."/>
            <person name="Wu Y."/>
            <person name="Xu J.R."/>
            <person name="Kang Z."/>
            <person name="Huang L."/>
        </authorList>
    </citation>
    <scope>NUCLEOTIDE SEQUENCE [LARGE SCALE GENOMIC DNA]</scope>
    <source>
        <strain>03-8</strain>
    </source>
</reference>
<reference key="2">
    <citation type="journal article" date="2025" name="Microb. Pathog.">
        <title>Mitogen-activated protein (MAP) kinase signalling pathway VmMkh1-VmMkk1-VmSpm1 regulates cell wall integrity in Valsamali.</title>
        <authorList>
            <person name="Diao Y."/>
            <person name="Xiong X."/>
            <person name="Jin J."/>
            <person name="Yu C."/>
            <person name="Tian Y."/>
            <person name="Zhao C."/>
            <person name="Wu Y."/>
            <person name="Liu H."/>
        </authorList>
    </citation>
    <scope>FUNCTION</scope>
    <scope>DISRUPTION PHENOTYPE</scope>
</reference>